<dbReference type="EMBL" id="CP000923">
    <property type="protein sequence ID" value="ABY92742.1"/>
    <property type="molecule type" value="Genomic_DNA"/>
</dbReference>
<dbReference type="RefSeq" id="WP_003868520.1">
    <property type="nucleotide sequence ID" value="NC_010320.1"/>
</dbReference>
<dbReference type="SMR" id="B0K0L7"/>
<dbReference type="KEGG" id="tex:Teth514_1453"/>
<dbReference type="HOGENOM" id="CLU_087936_3_0_9"/>
<dbReference type="Proteomes" id="UP000002155">
    <property type="component" value="Chromosome"/>
</dbReference>
<dbReference type="GO" id="GO:0005737">
    <property type="term" value="C:cytoplasm"/>
    <property type="evidence" value="ECO:0007669"/>
    <property type="project" value="UniProtKB-SubCell"/>
</dbReference>
<dbReference type="GO" id="GO:0009379">
    <property type="term" value="C:Holliday junction helicase complex"/>
    <property type="evidence" value="ECO:0007669"/>
    <property type="project" value="InterPro"/>
</dbReference>
<dbReference type="GO" id="GO:0048476">
    <property type="term" value="C:Holliday junction resolvase complex"/>
    <property type="evidence" value="ECO:0007669"/>
    <property type="project" value="UniProtKB-UniRule"/>
</dbReference>
<dbReference type="GO" id="GO:0005524">
    <property type="term" value="F:ATP binding"/>
    <property type="evidence" value="ECO:0007669"/>
    <property type="project" value="InterPro"/>
</dbReference>
<dbReference type="GO" id="GO:0000400">
    <property type="term" value="F:four-way junction DNA binding"/>
    <property type="evidence" value="ECO:0007669"/>
    <property type="project" value="UniProtKB-UniRule"/>
</dbReference>
<dbReference type="GO" id="GO:0009378">
    <property type="term" value="F:four-way junction helicase activity"/>
    <property type="evidence" value="ECO:0007669"/>
    <property type="project" value="InterPro"/>
</dbReference>
<dbReference type="GO" id="GO:0006310">
    <property type="term" value="P:DNA recombination"/>
    <property type="evidence" value="ECO:0007669"/>
    <property type="project" value="UniProtKB-UniRule"/>
</dbReference>
<dbReference type="GO" id="GO:0006281">
    <property type="term" value="P:DNA repair"/>
    <property type="evidence" value="ECO:0007669"/>
    <property type="project" value="UniProtKB-UniRule"/>
</dbReference>
<dbReference type="CDD" id="cd14332">
    <property type="entry name" value="UBA_RuvA_C"/>
    <property type="match status" value="1"/>
</dbReference>
<dbReference type="Gene3D" id="1.10.150.20">
    <property type="entry name" value="5' to 3' exonuclease, C-terminal subdomain"/>
    <property type="match status" value="1"/>
</dbReference>
<dbReference type="Gene3D" id="1.10.8.10">
    <property type="entry name" value="DNA helicase RuvA subunit, C-terminal domain"/>
    <property type="match status" value="1"/>
</dbReference>
<dbReference type="Gene3D" id="2.40.50.140">
    <property type="entry name" value="Nucleic acid-binding proteins"/>
    <property type="match status" value="1"/>
</dbReference>
<dbReference type="HAMAP" id="MF_00031">
    <property type="entry name" value="DNA_HJ_migration_RuvA"/>
    <property type="match status" value="1"/>
</dbReference>
<dbReference type="InterPro" id="IPR013849">
    <property type="entry name" value="DNA_helicase_Holl-junc_RuvA_I"/>
</dbReference>
<dbReference type="InterPro" id="IPR003583">
    <property type="entry name" value="Hlx-hairpin-Hlx_DNA-bd_motif"/>
</dbReference>
<dbReference type="InterPro" id="IPR012340">
    <property type="entry name" value="NA-bd_OB-fold"/>
</dbReference>
<dbReference type="InterPro" id="IPR000085">
    <property type="entry name" value="RuvA"/>
</dbReference>
<dbReference type="InterPro" id="IPR010994">
    <property type="entry name" value="RuvA_2-like"/>
</dbReference>
<dbReference type="InterPro" id="IPR011114">
    <property type="entry name" value="RuvA_C"/>
</dbReference>
<dbReference type="InterPro" id="IPR036267">
    <property type="entry name" value="RuvA_C_sf"/>
</dbReference>
<dbReference type="NCBIfam" id="TIGR00084">
    <property type="entry name" value="ruvA"/>
    <property type="match status" value="1"/>
</dbReference>
<dbReference type="Pfam" id="PF14520">
    <property type="entry name" value="HHH_5"/>
    <property type="match status" value="1"/>
</dbReference>
<dbReference type="Pfam" id="PF07499">
    <property type="entry name" value="RuvA_C"/>
    <property type="match status" value="1"/>
</dbReference>
<dbReference type="Pfam" id="PF01330">
    <property type="entry name" value="RuvA_N"/>
    <property type="match status" value="1"/>
</dbReference>
<dbReference type="SMART" id="SM00278">
    <property type="entry name" value="HhH1"/>
    <property type="match status" value="2"/>
</dbReference>
<dbReference type="SUPFAM" id="SSF46929">
    <property type="entry name" value="DNA helicase RuvA subunit, C-terminal domain"/>
    <property type="match status" value="1"/>
</dbReference>
<dbReference type="SUPFAM" id="SSF50249">
    <property type="entry name" value="Nucleic acid-binding proteins"/>
    <property type="match status" value="1"/>
</dbReference>
<dbReference type="SUPFAM" id="SSF47781">
    <property type="entry name" value="RuvA domain 2-like"/>
    <property type="match status" value="1"/>
</dbReference>
<keyword id="KW-0963">Cytoplasm</keyword>
<keyword id="KW-0227">DNA damage</keyword>
<keyword id="KW-0233">DNA recombination</keyword>
<keyword id="KW-0234">DNA repair</keyword>
<keyword id="KW-0238">DNA-binding</keyword>
<protein>
    <recommendedName>
        <fullName evidence="1">Holliday junction branch migration complex subunit RuvA</fullName>
    </recommendedName>
</protein>
<reference key="1">
    <citation type="submission" date="2008-01" db="EMBL/GenBank/DDBJ databases">
        <title>Complete sequence of Thermoanaerobacter sp. X514.</title>
        <authorList>
            <consortium name="US DOE Joint Genome Institute"/>
            <person name="Copeland A."/>
            <person name="Lucas S."/>
            <person name="Lapidus A."/>
            <person name="Barry K."/>
            <person name="Glavina del Rio T."/>
            <person name="Dalin E."/>
            <person name="Tice H."/>
            <person name="Pitluck S."/>
            <person name="Bruce D."/>
            <person name="Goodwin L."/>
            <person name="Saunders E."/>
            <person name="Brettin T."/>
            <person name="Detter J.C."/>
            <person name="Han C."/>
            <person name="Schmutz J."/>
            <person name="Larimer F."/>
            <person name="Land M."/>
            <person name="Hauser L."/>
            <person name="Kyrpides N."/>
            <person name="Kim E."/>
            <person name="Hemme C."/>
            <person name="Fields M.W."/>
            <person name="He Z."/>
            <person name="Zhou J."/>
            <person name="Richardson P."/>
        </authorList>
    </citation>
    <scope>NUCLEOTIDE SEQUENCE [LARGE SCALE GENOMIC DNA]</scope>
    <source>
        <strain>X514</strain>
    </source>
</reference>
<accession>B0K0L7</accession>
<organism>
    <name type="scientific">Thermoanaerobacter sp. (strain X514)</name>
    <dbReference type="NCBI Taxonomy" id="399726"/>
    <lineage>
        <taxon>Bacteria</taxon>
        <taxon>Bacillati</taxon>
        <taxon>Bacillota</taxon>
        <taxon>Clostridia</taxon>
        <taxon>Thermoanaerobacterales</taxon>
        <taxon>Thermoanaerobacteraceae</taxon>
        <taxon>Thermoanaerobacter</taxon>
    </lineage>
</organism>
<proteinExistence type="inferred from homology"/>
<feature type="chain" id="PRO_1000090381" description="Holliday junction branch migration complex subunit RuvA">
    <location>
        <begin position="1"/>
        <end position="187"/>
    </location>
</feature>
<feature type="region of interest" description="Domain I" evidence="1">
    <location>
        <begin position="1"/>
        <end position="64"/>
    </location>
</feature>
<feature type="region of interest" description="Domain II" evidence="1">
    <location>
        <begin position="65"/>
        <end position="136"/>
    </location>
</feature>
<feature type="region of interest" description="Flexible linker" evidence="1">
    <location>
        <begin position="136"/>
        <end position="139"/>
    </location>
</feature>
<feature type="region of interest" description="Domain III" evidence="1">
    <location>
        <begin position="140"/>
        <end position="187"/>
    </location>
</feature>
<gene>
    <name evidence="1" type="primary">ruvA</name>
    <name type="ordered locus">Teth514_1453</name>
</gene>
<sequence length="187" mass="20548">MIEYVRGIIEDIGQDYVVIDFMGIGIKVFVPFSTLKVLPSKGNITKLYTYLQVREDGFQIFGFKTKEELDLFEKLLSVSGVGPKGALSILSVVSIDNFVKAVNAGDYKALTVAPGIGKKTAERIILELKDKLPKEIVFEGDNNFSNEALEALLALGYTKSEAIYALADITCDSVEDAVKQALKKLMK</sequence>
<evidence type="ECO:0000255" key="1">
    <source>
        <dbReference type="HAMAP-Rule" id="MF_00031"/>
    </source>
</evidence>
<name>RUVA_THEPX</name>
<comment type="function">
    <text evidence="1">The RuvA-RuvB-RuvC complex processes Holliday junction (HJ) DNA during genetic recombination and DNA repair, while the RuvA-RuvB complex plays an important role in the rescue of blocked DNA replication forks via replication fork reversal (RFR). RuvA specifically binds to HJ cruciform DNA, conferring on it an open structure. The RuvB hexamer acts as an ATP-dependent pump, pulling dsDNA into and through the RuvAB complex. HJ branch migration allows RuvC to scan DNA until it finds its consensus sequence, where it cleaves and resolves the cruciform DNA.</text>
</comment>
<comment type="subunit">
    <text evidence="1">Homotetramer. Forms an RuvA(8)-RuvB(12)-Holliday junction (HJ) complex. HJ DNA is sandwiched between 2 RuvA tetramers; dsDNA enters through RuvA and exits via RuvB. An RuvB hexamer assembles on each DNA strand where it exits the tetramer. Each RuvB hexamer is contacted by two RuvA subunits (via domain III) on 2 adjacent RuvB subunits; this complex drives branch migration. In the full resolvosome a probable DNA-RuvA(4)-RuvB(12)-RuvC(2) complex forms which resolves the HJ.</text>
</comment>
<comment type="subcellular location">
    <subcellularLocation>
        <location evidence="1">Cytoplasm</location>
    </subcellularLocation>
</comment>
<comment type="domain">
    <text evidence="1">Has three domains with a flexible linker between the domains II and III and assumes an 'L' shape. Domain III is highly mobile and contacts RuvB.</text>
</comment>
<comment type="similarity">
    <text evidence="1">Belongs to the RuvA family.</text>
</comment>